<comment type="function">
    <text evidence="1">Binds 16S rRNA, required for the assembly of 30S particles and may also be responsible for determining the conformation of the 16S rRNA at the A site.</text>
</comment>
<comment type="subunit">
    <text evidence="1">Part of the 30S ribosomal subunit. Contacts proteins S3 and S10.</text>
</comment>
<comment type="similarity">
    <text evidence="1">Belongs to the universal ribosomal protein uS14 family.</text>
</comment>
<dbReference type="EMBL" id="CP000614">
    <property type="protein sequence ID" value="ABO53356.1"/>
    <property type="molecule type" value="Genomic_DNA"/>
</dbReference>
<dbReference type="SMR" id="A4JAQ3"/>
<dbReference type="KEGG" id="bvi:Bcep1808_0343"/>
<dbReference type="eggNOG" id="COG0199">
    <property type="taxonomic scope" value="Bacteria"/>
</dbReference>
<dbReference type="HOGENOM" id="CLU_139869_0_1_4"/>
<dbReference type="Proteomes" id="UP000002287">
    <property type="component" value="Chromosome 1"/>
</dbReference>
<dbReference type="GO" id="GO:0005737">
    <property type="term" value="C:cytoplasm"/>
    <property type="evidence" value="ECO:0007669"/>
    <property type="project" value="UniProtKB-ARBA"/>
</dbReference>
<dbReference type="GO" id="GO:0015935">
    <property type="term" value="C:small ribosomal subunit"/>
    <property type="evidence" value="ECO:0007669"/>
    <property type="project" value="TreeGrafter"/>
</dbReference>
<dbReference type="GO" id="GO:0019843">
    <property type="term" value="F:rRNA binding"/>
    <property type="evidence" value="ECO:0007669"/>
    <property type="project" value="UniProtKB-UniRule"/>
</dbReference>
<dbReference type="GO" id="GO:0003735">
    <property type="term" value="F:structural constituent of ribosome"/>
    <property type="evidence" value="ECO:0007669"/>
    <property type="project" value="InterPro"/>
</dbReference>
<dbReference type="GO" id="GO:0006412">
    <property type="term" value="P:translation"/>
    <property type="evidence" value="ECO:0007669"/>
    <property type="project" value="UniProtKB-UniRule"/>
</dbReference>
<dbReference type="FunFam" id="1.10.287.1480:FF:000001">
    <property type="entry name" value="30S ribosomal protein S14"/>
    <property type="match status" value="1"/>
</dbReference>
<dbReference type="Gene3D" id="1.10.287.1480">
    <property type="match status" value="1"/>
</dbReference>
<dbReference type="HAMAP" id="MF_00537">
    <property type="entry name" value="Ribosomal_uS14_1"/>
    <property type="match status" value="1"/>
</dbReference>
<dbReference type="InterPro" id="IPR001209">
    <property type="entry name" value="Ribosomal_uS14"/>
</dbReference>
<dbReference type="InterPro" id="IPR023036">
    <property type="entry name" value="Ribosomal_uS14_bac/plastid"/>
</dbReference>
<dbReference type="NCBIfam" id="NF006477">
    <property type="entry name" value="PRK08881.1"/>
    <property type="match status" value="1"/>
</dbReference>
<dbReference type="PANTHER" id="PTHR19836">
    <property type="entry name" value="30S RIBOSOMAL PROTEIN S14"/>
    <property type="match status" value="1"/>
</dbReference>
<dbReference type="PANTHER" id="PTHR19836:SF19">
    <property type="entry name" value="SMALL RIBOSOMAL SUBUNIT PROTEIN US14M"/>
    <property type="match status" value="1"/>
</dbReference>
<dbReference type="Pfam" id="PF00253">
    <property type="entry name" value="Ribosomal_S14"/>
    <property type="match status" value="1"/>
</dbReference>
<dbReference type="SUPFAM" id="SSF57716">
    <property type="entry name" value="Glucocorticoid receptor-like (DNA-binding domain)"/>
    <property type="match status" value="1"/>
</dbReference>
<protein>
    <recommendedName>
        <fullName evidence="1">Small ribosomal subunit protein uS14</fullName>
    </recommendedName>
    <alternativeName>
        <fullName evidence="2">30S ribosomal protein S14</fullName>
    </alternativeName>
</protein>
<gene>
    <name evidence="1" type="primary">rpsN</name>
    <name type="ordered locus">Bcep1808_0343</name>
</gene>
<feature type="chain" id="PRO_1000128345" description="Small ribosomal subunit protein uS14">
    <location>
        <begin position="1"/>
        <end position="101"/>
    </location>
</feature>
<organism>
    <name type="scientific">Burkholderia vietnamiensis (strain G4 / LMG 22486)</name>
    <name type="common">Burkholderia cepacia (strain R1808)</name>
    <dbReference type="NCBI Taxonomy" id="269482"/>
    <lineage>
        <taxon>Bacteria</taxon>
        <taxon>Pseudomonadati</taxon>
        <taxon>Pseudomonadota</taxon>
        <taxon>Betaproteobacteria</taxon>
        <taxon>Burkholderiales</taxon>
        <taxon>Burkholderiaceae</taxon>
        <taxon>Burkholderia</taxon>
        <taxon>Burkholderia cepacia complex</taxon>
    </lineage>
</organism>
<evidence type="ECO:0000255" key="1">
    <source>
        <dbReference type="HAMAP-Rule" id="MF_00537"/>
    </source>
</evidence>
<evidence type="ECO:0000305" key="2"/>
<reference key="1">
    <citation type="submission" date="2007-03" db="EMBL/GenBank/DDBJ databases">
        <title>Complete sequence of chromosome 1 of Burkholderia vietnamiensis G4.</title>
        <authorList>
            <consortium name="US DOE Joint Genome Institute"/>
            <person name="Copeland A."/>
            <person name="Lucas S."/>
            <person name="Lapidus A."/>
            <person name="Barry K."/>
            <person name="Detter J.C."/>
            <person name="Glavina del Rio T."/>
            <person name="Hammon N."/>
            <person name="Israni S."/>
            <person name="Dalin E."/>
            <person name="Tice H."/>
            <person name="Pitluck S."/>
            <person name="Chain P."/>
            <person name="Malfatti S."/>
            <person name="Shin M."/>
            <person name="Vergez L."/>
            <person name="Schmutz J."/>
            <person name="Larimer F."/>
            <person name="Land M."/>
            <person name="Hauser L."/>
            <person name="Kyrpides N."/>
            <person name="Tiedje J."/>
            <person name="Richardson P."/>
        </authorList>
    </citation>
    <scope>NUCLEOTIDE SEQUENCE [LARGE SCALE GENOMIC DNA]</scope>
    <source>
        <strain>G4 / LMG 22486</strain>
    </source>
</reference>
<accession>A4JAQ3</accession>
<name>RS14_BURVG</name>
<sequence length="101" mass="11722">MAKLALIEREKKRARLVAKFAAKREALKAIVEDQSKSEEERYEARLELQQLPRNSNPTRQRNRCAITGRPRGTFRKFGLARNKIREIAFRGEIPGLTKASW</sequence>
<keyword id="KW-0687">Ribonucleoprotein</keyword>
<keyword id="KW-0689">Ribosomal protein</keyword>
<keyword id="KW-0694">RNA-binding</keyword>
<keyword id="KW-0699">rRNA-binding</keyword>
<proteinExistence type="inferred from homology"/>